<reference evidence="5" key="1">
    <citation type="journal article" date="2009" name="BMC Evol. Biol.">
        <title>A proteomic approach for studying insect phylogeny: CAPA peptides of ancient insect taxa (Dictyoptera, Blattoptera) as a test case.</title>
        <authorList>
            <person name="Roth S."/>
            <person name="Fromm B."/>
            <person name="Gaede G."/>
            <person name="Predel R."/>
        </authorList>
    </citation>
    <scope>PROTEIN SEQUENCE</scope>
    <scope>AMIDATION AT LEU-17</scope>
    <source>
        <tissue evidence="3">Abdominal perisympathetic organs</tissue>
    </source>
</reference>
<protein>
    <recommendedName>
        <fullName evidence="1">Pyrokinin-5</fullName>
    </recommendedName>
    <alternativeName>
        <fullName evidence="4">DerAt-Capa-PK</fullName>
    </alternativeName>
    <alternativeName>
        <fullName evidence="1">FXPRL-amide</fullName>
    </alternativeName>
</protein>
<accession>P85596</accession>
<name>PPK5_DERAT</name>
<evidence type="ECO:0000250" key="1">
    <source>
        <dbReference type="UniProtKB" id="P82617"/>
    </source>
</evidence>
<evidence type="ECO:0000255" key="2"/>
<evidence type="ECO:0000269" key="3">
    <source>
    </source>
</evidence>
<evidence type="ECO:0000303" key="4">
    <source>
    </source>
</evidence>
<evidence type="ECO:0000305" key="5"/>
<feature type="peptide" id="PRO_0000378686" description="Pyrokinin-5" evidence="3">
    <location>
        <begin position="1"/>
        <end position="17"/>
    </location>
</feature>
<feature type="modified residue" description="Leucine amide" evidence="3">
    <location>
        <position position="17"/>
    </location>
</feature>
<sequence length="17" mass="1653">GGGGSGETSGMWFGPRL</sequence>
<keyword id="KW-0027">Amidation</keyword>
<keyword id="KW-0903">Direct protein sequencing</keyword>
<keyword id="KW-0527">Neuropeptide</keyword>
<keyword id="KW-0964">Secreted</keyword>
<proteinExistence type="evidence at protein level"/>
<comment type="function">
    <text evidence="1">Myoactive.</text>
</comment>
<comment type="subcellular location">
    <subcellularLocation>
        <location evidence="5">Secreted</location>
    </subcellularLocation>
</comment>
<comment type="similarity">
    <text evidence="2">Belongs to the pyrokinin family.</text>
</comment>
<organism>
    <name type="scientific">Deropeltis atra</name>
    <name type="common">Cockroach</name>
    <dbReference type="NCBI Taxonomy" id="596120"/>
    <lineage>
        <taxon>Eukaryota</taxon>
        <taxon>Metazoa</taxon>
        <taxon>Ecdysozoa</taxon>
        <taxon>Arthropoda</taxon>
        <taxon>Hexapoda</taxon>
        <taxon>Insecta</taxon>
        <taxon>Pterygota</taxon>
        <taxon>Neoptera</taxon>
        <taxon>Polyneoptera</taxon>
        <taxon>Dictyoptera</taxon>
        <taxon>Blattodea</taxon>
        <taxon>Blattoidea</taxon>
        <taxon>Blattidae</taxon>
        <taxon>Blattinae</taxon>
        <taxon>Deropeltis</taxon>
    </lineage>
</organism>
<dbReference type="GO" id="GO:0005576">
    <property type="term" value="C:extracellular region"/>
    <property type="evidence" value="ECO:0007669"/>
    <property type="project" value="UniProtKB-SubCell"/>
</dbReference>
<dbReference type="GO" id="GO:0005184">
    <property type="term" value="F:neuropeptide hormone activity"/>
    <property type="evidence" value="ECO:0007669"/>
    <property type="project" value="InterPro"/>
</dbReference>
<dbReference type="GO" id="GO:0007218">
    <property type="term" value="P:neuropeptide signaling pathway"/>
    <property type="evidence" value="ECO:0007669"/>
    <property type="project" value="UniProtKB-KW"/>
</dbReference>
<dbReference type="InterPro" id="IPR001484">
    <property type="entry name" value="Pyrokinin_CS"/>
</dbReference>
<dbReference type="PROSITE" id="PS00539">
    <property type="entry name" value="PYROKININ"/>
    <property type="match status" value="1"/>
</dbReference>